<dbReference type="EC" id="6.1.1.20" evidence="1"/>
<dbReference type="EMBL" id="AE009439">
    <property type="protein sequence ID" value="AAM01488.1"/>
    <property type="molecule type" value="Genomic_DNA"/>
</dbReference>
<dbReference type="RefSeq" id="WP_011018643.1">
    <property type="nucleotide sequence ID" value="NC_003551.1"/>
</dbReference>
<dbReference type="SMR" id="Q8TYM5"/>
<dbReference type="FunCoup" id="Q8TYM5">
    <property type="interactions" value="240"/>
</dbReference>
<dbReference type="STRING" id="190192.MK0271"/>
<dbReference type="PaxDb" id="190192-MK0271"/>
<dbReference type="EnsemblBacteria" id="AAM01488">
    <property type="protein sequence ID" value="AAM01488"/>
    <property type="gene ID" value="MK0271"/>
</dbReference>
<dbReference type="GeneID" id="1477574"/>
<dbReference type="KEGG" id="mka:MK0271"/>
<dbReference type="PATRIC" id="fig|190192.8.peg.274"/>
<dbReference type="HOGENOM" id="CLU_025086_2_2_2"/>
<dbReference type="InParanoid" id="Q8TYM5"/>
<dbReference type="OrthoDB" id="372178at2157"/>
<dbReference type="Proteomes" id="UP000001826">
    <property type="component" value="Chromosome"/>
</dbReference>
<dbReference type="GO" id="GO:0005737">
    <property type="term" value="C:cytoplasm"/>
    <property type="evidence" value="ECO:0007669"/>
    <property type="project" value="UniProtKB-SubCell"/>
</dbReference>
<dbReference type="GO" id="GO:0005524">
    <property type="term" value="F:ATP binding"/>
    <property type="evidence" value="ECO:0007669"/>
    <property type="project" value="UniProtKB-UniRule"/>
</dbReference>
<dbReference type="GO" id="GO:0000287">
    <property type="term" value="F:magnesium ion binding"/>
    <property type="evidence" value="ECO:0007669"/>
    <property type="project" value="UniProtKB-UniRule"/>
</dbReference>
<dbReference type="GO" id="GO:0004826">
    <property type="term" value="F:phenylalanine-tRNA ligase activity"/>
    <property type="evidence" value="ECO:0007669"/>
    <property type="project" value="UniProtKB-UniRule"/>
</dbReference>
<dbReference type="GO" id="GO:0000049">
    <property type="term" value="F:tRNA binding"/>
    <property type="evidence" value="ECO:0007669"/>
    <property type="project" value="InterPro"/>
</dbReference>
<dbReference type="GO" id="GO:0006432">
    <property type="term" value="P:phenylalanyl-tRNA aminoacylation"/>
    <property type="evidence" value="ECO:0007669"/>
    <property type="project" value="UniProtKB-UniRule"/>
</dbReference>
<dbReference type="CDD" id="cd00090">
    <property type="entry name" value="HTH_ARSR"/>
    <property type="match status" value="1"/>
</dbReference>
<dbReference type="CDD" id="cd00496">
    <property type="entry name" value="PheRS_alpha_core"/>
    <property type="match status" value="1"/>
</dbReference>
<dbReference type="FunFam" id="3.30.930.10:FF:000095">
    <property type="entry name" value="Phenylalanine--tRNA ligase alpha subunit"/>
    <property type="match status" value="1"/>
</dbReference>
<dbReference type="Gene3D" id="3.30.930.10">
    <property type="entry name" value="Bira Bifunctional Protein, Domain 2"/>
    <property type="match status" value="1"/>
</dbReference>
<dbReference type="Gene3D" id="1.10.10.10">
    <property type="entry name" value="Winged helix-like DNA-binding domain superfamily/Winged helix DNA-binding domain"/>
    <property type="match status" value="2"/>
</dbReference>
<dbReference type="HAMAP" id="MF_00282">
    <property type="entry name" value="Phe_tRNA_synth_alpha2"/>
    <property type="match status" value="1"/>
</dbReference>
<dbReference type="InterPro" id="IPR006195">
    <property type="entry name" value="aa-tRNA-synth_II"/>
</dbReference>
<dbReference type="InterPro" id="IPR045864">
    <property type="entry name" value="aa-tRNA-synth_II/BPL/LPL"/>
</dbReference>
<dbReference type="InterPro" id="IPR011991">
    <property type="entry name" value="ArsR-like_HTH"/>
</dbReference>
<dbReference type="InterPro" id="IPR004529">
    <property type="entry name" value="Phe-tRNA-synth_IIc_asu"/>
</dbReference>
<dbReference type="InterPro" id="IPR022917">
    <property type="entry name" value="Phe_tRNA_ligase_alpha_bac/arc"/>
</dbReference>
<dbReference type="InterPro" id="IPR002319">
    <property type="entry name" value="Phenylalanyl-tRNA_Synthase"/>
</dbReference>
<dbReference type="InterPro" id="IPR036388">
    <property type="entry name" value="WH-like_DNA-bd_sf"/>
</dbReference>
<dbReference type="InterPro" id="IPR036390">
    <property type="entry name" value="WH_DNA-bd_sf"/>
</dbReference>
<dbReference type="NCBIfam" id="TIGR00468">
    <property type="entry name" value="pheS"/>
    <property type="match status" value="1"/>
</dbReference>
<dbReference type="NCBIfam" id="NF003210">
    <property type="entry name" value="PRK04172.1"/>
    <property type="match status" value="1"/>
</dbReference>
<dbReference type="PANTHER" id="PTHR11538:SF40">
    <property type="entry name" value="PHENYLALANINE--TRNA LIGASE ALPHA SUBUNIT"/>
    <property type="match status" value="1"/>
</dbReference>
<dbReference type="PANTHER" id="PTHR11538">
    <property type="entry name" value="PHENYLALANYL-TRNA SYNTHETASE"/>
    <property type="match status" value="1"/>
</dbReference>
<dbReference type="Pfam" id="PF13412">
    <property type="entry name" value="HTH_24"/>
    <property type="match status" value="1"/>
</dbReference>
<dbReference type="Pfam" id="PF01409">
    <property type="entry name" value="tRNA-synt_2d"/>
    <property type="match status" value="1"/>
</dbReference>
<dbReference type="SUPFAM" id="SSF55681">
    <property type="entry name" value="Class II aaRS and biotin synthetases"/>
    <property type="match status" value="1"/>
</dbReference>
<dbReference type="SUPFAM" id="SSF46785">
    <property type="entry name" value="Winged helix' DNA-binding domain"/>
    <property type="match status" value="2"/>
</dbReference>
<dbReference type="PROSITE" id="PS50862">
    <property type="entry name" value="AA_TRNA_LIGASE_II"/>
    <property type="match status" value="1"/>
</dbReference>
<gene>
    <name evidence="1" type="primary">pheS</name>
    <name type="ordered locus">MK0271</name>
</gene>
<organism>
    <name type="scientific">Methanopyrus kandleri (strain AV19 / DSM 6324 / JCM 9639 / NBRC 100938)</name>
    <dbReference type="NCBI Taxonomy" id="190192"/>
    <lineage>
        <taxon>Archaea</taxon>
        <taxon>Methanobacteriati</taxon>
        <taxon>Methanobacteriota</taxon>
        <taxon>Methanomada group</taxon>
        <taxon>Methanopyri</taxon>
        <taxon>Methanopyrales</taxon>
        <taxon>Methanopyraceae</taxon>
        <taxon>Methanopyrus</taxon>
    </lineage>
</organism>
<proteinExistence type="inferred from homology"/>
<sequence length="524" mass="60078">MDPRELAERLTERDLRILIHLAESGEATPEELAESLDVDLGPVMRSLYWLEERGLIESEEETHEVYELGDEGKEYAEEGLPELRIVEVLRKIGGEGRLEEVLDRAGVPRKLAGPVLGWLRRKGLAEIKREDGETSLVLLEEEPEDVDQSVLEALAAEGSASVEELARKLEMDEEEVEKALKRLSERGDVLRAREETVKKVRLTERGEEVAEHAPEVLERDWITELKPEHLREGTWKEKEFKPYDVKAPTSPTFPGKRHPLKEVINEIRRIFLEMGFVEVSGPLVESSFWNFDALFQPQDHAAREMQDTFYLKEPAEAELPDEEVVEKVRAVHEDGGDTGSRGWGYEWDEGVARKTVLRTHTTAVSVRKLYEVEGPPLKAFSIGRVYRRETVDYKHLPEFHQCEGIVLAKDVSFRDLLGILEEFYRRMGFEEVRFRPAYFPYTVLSVEPEVYFEEKGDWVELGGAGIFRPEVLQPLGFDPDVVCLAWGLGVERLAMLKLGIDDIRDLYMSDLKTLLELPTARARR</sequence>
<accession>Q8TYM5</accession>
<keyword id="KW-0030">Aminoacyl-tRNA synthetase</keyword>
<keyword id="KW-0067">ATP-binding</keyword>
<keyword id="KW-0963">Cytoplasm</keyword>
<keyword id="KW-0436">Ligase</keyword>
<keyword id="KW-0460">Magnesium</keyword>
<keyword id="KW-0479">Metal-binding</keyword>
<keyword id="KW-0547">Nucleotide-binding</keyword>
<keyword id="KW-0648">Protein biosynthesis</keyword>
<keyword id="KW-1185">Reference proteome</keyword>
<comment type="catalytic activity">
    <reaction evidence="1">
        <text>tRNA(Phe) + L-phenylalanine + ATP = L-phenylalanyl-tRNA(Phe) + AMP + diphosphate + H(+)</text>
        <dbReference type="Rhea" id="RHEA:19413"/>
        <dbReference type="Rhea" id="RHEA-COMP:9668"/>
        <dbReference type="Rhea" id="RHEA-COMP:9699"/>
        <dbReference type="ChEBI" id="CHEBI:15378"/>
        <dbReference type="ChEBI" id="CHEBI:30616"/>
        <dbReference type="ChEBI" id="CHEBI:33019"/>
        <dbReference type="ChEBI" id="CHEBI:58095"/>
        <dbReference type="ChEBI" id="CHEBI:78442"/>
        <dbReference type="ChEBI" id="CHEBI:78531"/>
        <dbReference type="ChEBI" id="CHEBI:456215"/>
        <dbReference type="EC" id="6.1.1.20"/>
    </reaction>
</comment>
<comment type="cofactor">
    <cofactor evidence="1">
        <name>Mg(2+)</name>
        <dbReference type="ChEBI" id="CHEBI:18420"/>
    </cofactor>
    <text evidence="1">Binds 2 magnesium ions per tetramer.</text>
</comment>
<comment type="subunit">
    <text evidence="1">Tetramer of two alpha and two beta subunits.</text>
</comment>
<comment type="subcellular location">
    <subcellularLocation>
        <location evidence="1">Cytoplasm</location>
    </subcellularLocation>
</comment>
<comment type="similarity">
    <text evidence="1">Belongs to the class-II aminoacyl-tRNA synthetase family. Phe-tRNA synthetase alpha subunit type 2 subfamily.</text>
</comment>
<name>SYFA_METKA</name>
<feature type="chain" id="PRO_0000126811" description="Phenylalanine--tRNA ligase alpha subunit">
    <location>
        <begin position="1"/>
        <end position="524"/>
    </location>
</feature>
<feature type="binding site" evidence="1">
    <location>
        <position position="362"/>
    </location>
    <ligand>
        <name>L-phenylalanine</name>
        <dbReference type="ChEBI" id="CHEBI:58095"/>
    </ligand>
</feature>
<feature type="binding site" evidence="1">
    <location>
        <position position="441"/>
    </location>
    <ligand>
        <name>L-phenylalanine</name>
        <dbReference type="ChEBI" id="CHEBI:58095"/>
    </ligand>
</feature>
<feature type="binding site" evidence="1">
    <location>
        <position position="467"/>
    </location>
    <ligand>
        <name>L-phenylalanine</name>
        <dbReference type="ChEBI" id="CHEBI:58095"/>
    </ligand>
</feature>
<evidence type="ECO:0000255" key="1">
    <source>
        <dbReference type="HAMAP-Rule" id="MF_00282"/>
    </source>
</evidence>
<protein>
    <recommendedName>
        <fullName evidence="1">Phenylalanine--tRNA ligase alpha subunit</fullName>
        <ecNumber evidence="1">6.1.1.20</ecNumber>
    </recommendedName>
    <alternativeName>
        <fullName evidence="1">Phenylalanyl-tRNA synthetase alpha subunit</fullName>
        <shortName evidence="1">PheRS</shortName>
    </alternativeName>
</protein>
<reference key="1">
    <citation type="journal article" date="2002" name="Proc. Natl. Acad. Sci. U.S.A.">
        <title>The complete genome of hyperthermophile Methanopyrus kandleri AV19 and monophyly of archaeal methanogens.</title>
        <authorList>
            <person name="Slesarev A.I."/>
            <person name="Mezhevaya K.V."/>
            <person name="Makarova K.S."/>
            <person name="Polushin N.N."/>
            <person name="Shcherbinina O.V."/>
            <person name="Shakhova V.V."/>
            <person name="Belova G.I."/>
            <person name="Aravind L."/>
            <person name="Natale D.A."/>
            <person name="Rogozin I.B."/>
            <person name="Tatusov R.L."/>
            <person name="Wolf Y.I."/>
            <person name="Stetter K.O."/>
            <person name="Malykh A.G."/>
            <person name="Koonin E.V."/>
            <person name="Kozyavkin S.A."/>
        </authorList>
    </citation>
    <scope>NUCLEOTIDE SEQUENCE [LARGE SCALE GENOMIC DNA]</scope>
    <source>
        <strain>AV19 / DSM 6324 / JCM 9639 / NBRC 100938</strain>
    </source>
</reference>